<name>RS5_STAAN</name>
<protein>
    <recommendedName>
        <fullName evidence="1">Small ribosomal subunit protein uS5</fullName>
    </recommendedName>
    <alternativeName>
        <fullName evidence="2">30S ribosomal protein S5</fullName>
    </alternativeName>
</protein>
<sequence>MARREEETKEFEERVVTINRVAKVVKGGRRFRFTALVVVGDKNGRVGFGTGKAQEVPEAIKKAVEAAKKDLVVVPRVEGTTPHTITGRYGSGSVFMKPAAPGTGVIAGGPVRAVLELAGITDILSKSLGSNTPINMVRATIDGLQNLKNAEDVAKLRGKTVEELYN</sequence>
<gene>
    <name evidence="1" type="primary">rpsE</name>
    <name type="ordered locus">SA2031</name>
</gene>
<reference key="1">
    <citation type="journal article" date="2001" name="Lancet">
        <title>Whole genome sequencing of meticillin-resistant Staphylococcus aureus.</title>
        <authorList>
            <person name="Kuroda M."/>
            <person name="Ohta T."/>
            <person name="Uchiyama I."/>
            <person name="Baba T."/>
            <person name="Yuzawa H."/>
            <person name="Kobayashi I."/>
            <person name="Cui L."/>
            <person name="Oguchi A."/>
            <person name="Aoki K."/>
            <person name="Nagai Y."/>
            <person name="Lian J.-Q."/>
            <person name="Ito T."/>
            <person name="Kanamori M."/>
            <person name="Matsumaru H."/>
            <person name="Maruyama A."/>
            <person name="Murakami H."/>
            <person name="Hosoyama A."/>
            <person name="Mizutani-Ui Y."/>
            <person name="Takahashi N.K."/>
            <person name="Sawano T."/>
            <person name="Inoue R."/>
            <person name="Kaito C."/>
            <person name="Sekimizu K."/>
            <person name="Hirakawa H."/>
            <person name="Kuhara S."/>
            <person name="Goto S."/>
            <person name="Yabuzaki J."/>
            <person name="Kanehisa M."/>
            <person name="Yamashita A."/>
            <person name="Oshima K."/>
            <person name="Furuya K."/>
            <person name="Yoshino C."/>
            <person name="Shiba T."/>
            <person name="Hattori M."/>
            <person name="Ogasawara N."/>
            <person name="Hayashi H."/>
            <person name="Hiramatsu K."/>
        </authorList>
    </citation>
    <scope>NUCLEOTIDE SEQUENCE [LARGE SCALE GENOMIC DNA]</scope>
    <source>
        <strain>N315</strain>
    </source>
</reference>
<reference key="2">
    <citation type="submission" date="2007-10" db="UniProtKB">
        <title>Shotgun proteomic analysis of total and membrane protein extracts of S. aureus strain N315.</title>
        <authorList>
            <person name="Vaezzadeh A.R."/>
            <person name="Deshusses J."/>
            <person name="Lescuyer P."/>
            <person name="Hochstrasser D.F."/>
        </authorList>
    </citation>
    <scope>IDENTIFICATION BY MASS SPECTROMETRY [LARGE SCALE ANALYSIS]</scope>
    <source>
        <strain>N315</strain>
    </source>
</reference>
<proteinExistence type="evidence at protein level"/>
<feature type="chain" id="PRO_0000131595" description="Small ribosomal subunit protein uS5">
    <location>
        <begin position="1"/>
        <end position="166"/>
    </location>
</feature>
<feature type="domain" description="S5 DRBM" evidence="1">
    <location>
        <begin position="11"/>
        <end position="74"/>
    </location>
</feature>
<organism>
    <name type="scientific">Staphylococcus aureus (strain N315)</name>
    <dbReference type="NCBI Taxonomy" id="158879"/>
    <lineage>
        <taxon>Bacteria</taxon>
        <taxon>Bacillati</taxon>
        <taxon>Bacillota</taxon>
        <taxon>Bacilli</taxon>
        <taxon>Bacillales</taxon>
        <taxon>Staphylococcaceae</taxon>
        <taxon>Staphylococcus</taxon>
    </lineage>
</organism>
<dbReference type="EMBL" id="BA000018">
    <property type="protein sequence ID" value="BAB43325.1"/>
    <property type="molecule type" value="Genomic_DNA"/>
</dbReference>
<dbReference type="PIR" id="D90020">
    <property type="entry name" value="D90020"/>
</dbReference>
<dbReference type="RefSeq" id="WP_000113851.1">
    <property type="nucleotide sequence ID" value="NC_002745.2"/>
</dbReference>
<dbReference type="SMR" id="P66579"/>
<dbReference type="EnsemblBacteria" id="BAB43325">
    <property type="protein sequence ID" value="BAB43325"/>
    <property type="gene ID" value="BAB43325"/>
</dbReference>
<dbReference type="KEGG" id="sau:SA2031"/>
<dbReference type="HOGENOM" id="CLU_065898_2_2_9"/>
<dbReference type="GO" id="GO:0015935">
    <property type="term" value="C:small ribosomal subunit"/>
    <property type="evidence" value="ECO:0007669"/>
    <property type="project" value="InterPro"/>
</dbReference>
<dbReference type="GO" id="GO:0019843">
    <property type="term" value="F:rRNA binding"/>
    <property type="evidence" value="ECO:0007669"/>
    <property type="project" value="UniProtKB-UniRule"/>
</dbReference>
<dbReference type="GO" id="GO:0003735">
    <property type="term" value="F:structural constituent of ribosome"/>
    <property type="evidence" value="ECO:0007669"/>
    <property type="project" value="InterPro"/>
</dbReference>
<dbReference type="GO" id="GO:0006412">
    <property type="term" value="P:translation"/>
    <property type="evidence" value="ECO:0007669"/>
    <property type="project" value="UniProtKB-UniRule"/>
</dbReference>
<dbReference type="FunFam" id="3.30.160.20:FF:000001">
    <property type="entry name" value="30S ribosomal protein S5"/>
    <property type="match status" value="1"/>
</dbReference>
<dbReference type="FunFam" id="3.30.230.10:FF:000002">
    <property type="entry name" value="30S ribosomal protein S5"/>
    <property type="match status" value="1"/>
</dbReference>
<dbReference type="Gene3D" id="3.30.160.20">
    <property type="match status" value="1"/>
</dbReference>
<dbReference type="Gene3D" id="3.30.230.10">
    <property type="match status" value="1"/>
</dbReference>
<dbReference type="HAMAP" id="MF_01307_B">
    <property type="entry name" value="Ribosomal_uS5_B"/>
    <property type="match status" value="1"/>
</dbReference>
<dbReference type="InterPro" id="IPR020568">
    <property type="entry name" value="Ribosomal_Su5_D2-typ_SF"/>
</dbReference>
<dbReference type="InterPro" id="IPR000851">
    <property type="entry name" value="Ribosomal_uS5"/>
</dbReference>
<dbReference type="InterPro" id="IPR005712">
    <property type="entry name" value="Ribosomal_uS5_bac-type"/>
</dbReference>
<dbReference type="InterPro" id="IPR005324">
    <property type="entry name" value="Ribosomal_uS5_C"/>
</dbReference>
<dbReference type="InterPro" id="IPR013810">
    <property type="entry name" value="Ribosomal_uS5_N"/>
</dbReference>
<dbReference type="InterPro" id="IPR018192">
    <property type="entry name" value="Ribosomal_uS5_N_CS"/>
</dbReference>
<dbReference type="InterPro" id="IPR014721">
    <property type="entry name" value="Ribsml_uS5_D2-typ_fold_subgr"/>
</dbReference>
<dbReference type="NCBIfam" id="TIGR01021">
    <property type="entry name" value="rpsE_bact"/>
    <property type="match status" value="1"/>
</dbReference>
<dbReference type="PANTHER" id="PTHR48277">
    <property type="entry name" value="MITOCHONDRIAL RIBOSOMAL PROTEIN S5"/>
    <property type="match status" value="1"/>
</dbReference>
<dbReference type="PANTHER" id="PTHR48277:SF1">
    <property type="entry name" value="MITOCHONDRIAL RIBOSOMAL PROTEIN S5"/>
    <property type="match status" value="1"/>
</dbReference>
<dbReference type="Pfam" id="PF00333">
    <property type="entry name" value="Ribosomal_S5"/>
    <property type="match status" value="1"/>
</dbReference>
<dbReference type="Pfam" id="PF03719">
    <property type="entry name" value="Ribosomal_S5_C"/>
    <property type="match status" value="1"/>
</dbReference>
<dbReference type="SUPFAM" id="SSF54768">
    <property type="entry name" value="dsRNA-binding domain-like"/>
    <property type="match status" value="1"/>
</dbReference>
<dbReference type="SUPFAM" id="SSF54211">
    <property type="entry name" value="Ribosomal protein S5 domain 2-like"/>
    <property type="match status" value="1"/>
</dbReference>
<dbReference type="PROSITE" id="PS00585">
    <property type="entry name" value="RIBOSOMAL_S5"/>
    <property type="match status" value="1"/>
</dbReference>
<dbReference type="PROSITE" id="PS50881">
    <property type="entry name" value="S5_DSRBD"/>
    <property type="match status" value="1"/>
</dbReference>
<evidence type="ECO:0000255" key="1">
    <source>
        <dbReference type="HAMAP-Rule" id="MF_01307"/>
    </source>
</evidence>
<evidence type="ECO:0000305" key="2"/>
<keyword id="KW-0687">Ribonucleoprotein</keyword>
<keyword id="KW-0689">Ribosomal protein</keyword>
<keyword id="KW-0694">RNA-binding</keyword>
<keyword id="KW-0699">rRNA-binding</keyword>
<comment type="function">
    <text evidence="1">With S4 and S12 plays an important role in translational accuracy.</text>
</comment>
<comment type="function">
    <text evidence="1">Located at the back of the 30S subunit body where it stabilizes the conformation of the head with respect to the body.</text>
</comment>
<comment type="subunit">
    <text evidence="1">Part of the 30S ribosomal subunit. Contacts proteins S4 and S8.</text>
</comment>
<comment type="domain">
    <text>The N-terminal domain interacts with the head of the 30S subunit; the C-terminal domain interacts with the body and contacts protein S4. The interaction surface between S4 and S5 is involved in control of translational fidelity.</text>
</comment>
<comment type="similarity">
    <text evidence="1">Belongs to the universal ribosomal protein uS5 family.</text>
</comment>
<accession>P66579</accession>
<accession>Q99S38</accession>